<accession>P20163</accession>
<accession>O02085</accession>
<evidence type="ECO:0000250" key="1">
    <source>
        <dbReference type="UniProtKB" id="P11021"/>
    </source>
</evidence>
<evidence type="ECO:0000255" key="2"/>
<evidence type="ECO:0000255" key="3">
    <source>
        <dbReference type="PROSITE-ProRule" id="PRU10138"/>
    </source>
</evidence>
<evidence type="ECO:0000256" key="4">
    <source>
        <dbReference type="SAM" id="MobiDB-lite"/>
    </source>
</evidence>
<evidence type="ECO:0000269" key="5">
    <source>
    </source>
</evidence>
<evidence type="ECO:0000305" key="6"/>
<evidence type="ECO:0007829" key="7">
    <source>
        <dbReference type="PDB" id="2OP6"/>
    </source>
</evidence>
<keyword id="KW-0002">3D-structure</keyword>
<keyword id="KW-0067">ATP-binding</keyword>
<keyword id="KW-0143">Chaperone</keyword>
<keyword id="KW-0256">Endoplasmic reticulum</keyword>
<keyword id="KW-0378">Hydrolase</keyword>
<keyword id="KW-0547">Nucleotide-binding</keyword>
<keyword id="KW-1185">Reference proteome</keyword>
<keyword id="KW-0732">Signal</keyword>
<keyword id="KW-0346">Stress response</keyword>
<gene>
    <name type="primary">hsp-4</name>
    <name type="synonym">hsp70d</name>
    <name type="ORF">F43E2.8</name>
</gene>
<dbReference type="EC" id="3.6.4.10" evidence="1"/>
<dbReference type="EMBL" id="FO080417">
    <property type="protein sequence ID" value="CCD63548.1"/>
    <property type="molecule type" value="Genomic_DNA"/>
</dbReference>
<dbReference type="EMBL" id="M28528">
    <property type="protein sequence ID" value="AAA28076.1"/>
    <property type="molecule type" value="Genomic_DNA"/>
</dbReference>
<dbReference type="PIR" id="T34037">
    <property type="entry name" value="T34037"/>
</dbReference>
<dbReference type="RefSeq" id="NP_001370395.1">
    <property type="nucleotide sequence ID" value="NM_001383885.2"/>
</dbReference>
<dbReference type="RefSeq" id="NP_495536.1">
    <property type="nucleotide sequence ID" value="NM_063135.6"/>
</dbReference>
<dbReference type="PDB" id="2OP6">
    <property type="method" value="X-ray"/>
    <property type="resolution" value="1.85 A"/>
    <property type="chains" value="A=420-568"/>
</dbReference>
<dbReference type="PDBsum" id="2OP6"/>
<dbReference type="SMR" id="P20163"/>
<dbReference type="BioGRID" id="39538">
    <property type="interactions" value="16"/>
</dbReference>
<dbReference type="DIP" id="DIP-26704N"/>
<dbReference type="FunCoup" id="P20163">
    <property type="interactions" value="2321"/>
</dbReference>
<dbReference type="IntAct" id="P20163">
    <property type="interactions" value="3"/>
</dbReference>
<dbReference type="STRING" id="6239.F43E2.8a.2"/>
<dbReference type="PaxDb" id="6239-F43E2.8.1"/>
<dbReference type="PeptideAtlas" id="P20163"/>
<dbReference type="EnsemblMetazoa" id="F43E2.8a.1">
    <property type="protein sequence ID" value="F43E2.8a.1"/>
    <property type="gene ID" value="WBGene00002008"/>
</dbReference>
<dbReference type="EnsemblMetazoa" id="F43E2.8a.2">
    <property type="protein sequence ID" value="F43E2.8a.2"/>
    <property type="gene ID" value="WBGene00002008"/>
</dbReference>
<dbReference type="GeneID" id="174203"/>
<dbReference type="UCSC" id="F43E2.8.1">
    <property type="organism name" value="c. elegans"/>
</dbReference>
<dbReference type="AGR" id="WB:WBGene00002008"/>
<dbReference type="WormBase" id="F43E2.8a">
    <property type="protein sequence ID" value="CE07244"/>
    <property type="gene ID" value="WBGene00002008"/>
    <property type="gene designation" value="hsp-4"/>
</dbReference>
<dbReference type="eggNOG" id="KOG0100">
    <property type="taxonomic scope" value="Eukaryota"/>
</dbReference>
<dbReference type="HOGENOM" id="CLU_005965_3_0_1"/>
<dbReference type="InParanoid" id="P20163"/>
<dbReference type="OMA" id="DSKPCIE"/>
<dbReference type="OrthoDB" id="2401965at2759"/>
<dbReference type="PhylomeDB" id="P20163"/>
<dbReference type="EvolutionaryTrace" id="P20163"/>
<dbReference type="PRO" id="PR:P20163"/>
<dbReference type="Proteomes" id="UP000001940">
    <property type="component" value="Chromosome II"/>
</dbReference>
<dbReference type="Bgee" id="WBGene00002008">
    <property type="expression patterns" value="Expressed in adult organism and 4 other cell types or tissues"/>
</dbReference>
<dbReference type="ExpressionAtlas" id="P20163">
    <property type="expression patterns" value="baseline and differential"/>
</dbReference>
<dbReference type="GO" id="GO:0005737">
    <property type="term" value="C:cytoplasm"/>
    <property type="evidence" value="ECO:0000318"/>
    <property type="project" value="GO_Central"/>
</dbReference>
<dbReference type="GO" id="GO:0034663">
    <property type="term" value="C:endoplasmic reticulum chaperone complex"/>
    <property type="evidence" value="ECO:0000250"/>
    <property type="project" value="WormBase"/>
</dbReference>
<dbReference type="GO" id="GO:0005788">
    <property type="term" value="C:endoplasmic reticulum lumen"/>
    <property type="evidence" value="ECO:0000318"/>
    <property type="project" value="GO_Central"/>
</dbReference>
<dbReference type="GO" id="GO:0016020">
    <property type="term" value="C:membrane"/>
    <property type="evidence" value="ECO:0000318"/>
    <property type="project" value="GO_Central"/>
</dbReference>
<dbReference type="GO" id="GO:0005634">
    <property type="term" value="C:nucleus"/>
    <property type="evidence" value="ECO:0000318"/>
    <property type="project" value="GO_Central"/>
</dbReference>
<dbReference type="GO" id="GO:0005791">
    <property type="term" value="C:rough endoplasmic reticulum"/>
    <property type="evidence" value="ECO:0000314"/>
    <property type="project" value="WormBase"/>
</dbReference>
<dbReference type="GO" id="GO:0005524">
    <property type="term" value="F:ATP binding"/>
    <property type="evidence" value="ECO:0007669"/>
    <property type="project" value="UniProtKB-KW"/>
</dbReference>
<dbReference type="GO" id="GO:0016887">
    <property type="term" value="F:ATP hydrolysis activity"/>
    <property type="evidence" value="ECO:0000318"/>
    <property type="project" value="GO_Central"/>
</dbReference>
<dbReference type="GO" id="GO:0140662">
    <property type="term" value="F:ATP-dependent protein folding chaperone"/>
    <property type="evidence" value="ECO:0007669"/>
    <property type="project" value="InterPro"/>
</dbReference>
<dbReference type="GO" id="GO:0031072">
    <property type="term" value="F:heat shock protein binding"/>
    <property type="evidence" value="ECO:0000318"/>
    <property type="project" value="GO_Central"/>
</dbReference>
<dbReference type="GO" id="GO:0044183">
    <property type="term" value="F:protein folding chaperone"/>
    <property type="evidence" value="ECO:0000318"/>
    <property type="project" value="GO_Central"/>
</dbReference>
<dbReference type="GO" id="GO:0061629">
    <property type="term" value="F:RNA polymerase II-specific DNA-binding transcription factor binding"/>
    <property type="evidence" value="ECO:0000353"/>
    <property type="project" value="WormBase"/>
</dbReference>
<dbReference type="GO" id="GO:0051085">
    <property type="term" value="P:chaperone cofactor-dependent protein refolding"/>
    <property type="evidence" value="ECO:0000318"/>
    <property type="project" value="GO_Central"/>
</dbReference>
<dbReference type="GO" id="GO:0030968">
    <property type="term" value="P:endoplasmic reticulum unfolded protein response"/>
    <property type="evidence" value="ECO:0000270"/>
    <property type="project" value="WormBase"/>
</dbReference>
<dbReference type="GO" id="GO:0036503">
    <property type="term" value="P:ERAD pathway"/>
    <property type="evidence" value="ECO:0000318"/>
    <property type="project" value="GO_Central"/>
</dbReference>
<dbReference type="GO" id="GO:0042026">
    <property type="term" value="P:protein refolding"/>
    <property type="evidence" value="ECO:0000318"/>
    <property type="project" value="GO_Central"/>
</dbReference>
<dbReference type="CDD" id="cd10241">
    <property type="entry name" value="ASKHA_NBD_HSP70_BiP"/>
    <property type="match status" value="1"/>
</dbReference>
<dbReference type="FunFam" id="3.90.640.10:FF:000153">
    <property type="entry name" value="Endoplasmic reticulum chaperone BiP"/>
    <property type="match status" value="1"/>
</dbReference>
<dbReference type="FunFam" id="2.60.34.10:FF:000002">
    <property type="entry name" value="Heat shock 70 kDa"/>
    <property type="match status" value="1"/>
</dbReference>
<dbReference type="FunFam" id="3.30.420.40:FF:000172">
    <property type="entry name" value="Heat shock 70 kDa protein"/>
    <property type="match status" value="1"/>
</dbReference>
<dbReference type="FunFam" id="3.30.30.30:FF:000001">
    <property type="entry name" value="heat shock 70 kDa protein-like"/>
    <property type="match status" value="1"/>
</dbReference>
<dbReference type="FunFam" id="1.20.1270.10:FF:000016">
    <property type="entry name" value="Heat shock protein 70"/>
    <property type="match status" value="1"/>
</dbReference>
<dbReference type="FunFam" id="3.30.420.40:FF:000026">
    <property type="entry name" value="Heat shock protein 70"/>
    <property type="match status" value="1"/>
</dbReference>
<dbReference type="Gene3D" id="1.20.1270.10">
    <property type="match status" value="1"/>
</dbReference>
<dbReference type="Gene3D" id="3.30.420.40">
    <property type="match status" value="2"/>
</dbReference>
<dbReference type="Gene3D" id="3.90.640.10">
    <property type="entry name" value="Actin, Chain A, domain 4"/>
    <property type="match status" value="1"/>
</dbReference>
<dbReference type="Gene3D" id="2.60.34.10">
    <property type="entry name" value="Substrate Binding Domain Of DNAk, Chain A, domain 1"/>
    <property type="match status" value="1"/>
</dbReference>
<dbReference type="InterPro" id="IPR043129">
    <property type="entry name" value="ATPase_NBD"/>
</dbReference>
<dbReference type="InterPro" id="IPR042050">
    <property type="entry name" value="BIP_NBD"/>
</dbReference>
<dbReference type="InterPro" id="IPR018181">
    <property type="entry name" value="Heat_shock_70_CS"/>
</dbReference>
<dbReference type="InterPro" id="IPR029048">
    <property type="entry name" value="HSP70_C_sf"/>
</dbReference>
<dbReference type="InterPro" id="IPR029047">
    <property type="entry name" value="HSP70_peptide-bd_sf"/>
</dbReference>
<dbReference type="InterPro" id="IPR013126">
    <property type="entry name" value="Hsp_70_fam"/>
</dbReference>
<dbReference type="NCBIfam" id="NF001413">
    <property type="entry name" value="PRK00290.1"/>
    <property type="match status" value="1"/>
</dbReference>
<dbReference type="PANTHER" id="PTHR19375">
    <property type="entry name" value="HEAT SHOCK PROTEIN 70KDA"/>
    <property type="match status" value="1"/>
</dbReference>
<dbReference type="Pfam" id="PF00012">
    <property type="entry name" value="HSP70"/>
    <property type="match status" value="1"/>
</dbReference>
<dbReference type="PRINTS" id="PR00301">
    <property type="entry name" value="HEATSHOCK70"/>
</dbReference>
<dbReference type="SUPFAM" id="SSF53067">
    <property type="entry name" value="Actin-like ATPase domain"/>
    <property type="match status" value="2"/>
</dbReference>
<dbReference type="SUPFAM" id="SSF100934">
    <property type="entry name" value="Heat shock protein 70kD (HSP70), C-terminal subdomain"/>
    <property type="match status" value="1"/>
</dbReference>
<dbReference type="SUPFAM" id="SSF100920">
    <property type="entry name" value="Heat shock protein 70kD (HSP70), peptide-binding domain"/>
    <property type="match status" value="1"/>
</dbReference>
<dbReference type="PROSITE" id="PS00014">
    <property type="entry name" value="ER_TARGET"/>
    <property type="match status" value="1"/>
</dbReference>
<dbReference type="PROSITE" id="PS00297">
    <property type="entry name" value="HSP70_1"/>
    <property type="match status" value="1"/>
</dbReference>
<dbReference type="PROSITE" id="PS00329">
    <property type="entry name" value="HSP70_2"/>
    <property type="match status" value="1"/>
</dbReference>
<dbReference type="PROSITE" id="PS01036">
    <property type="entry name" value="HSP70_3"/>
    <property type="match status" value="1"/>
</dbReference>
<organism>
    <name type="scientific">Caenorhabditis elegans</name>
    <dbReference type="NCBI Taxonomy" id="6239"/>
    <lineage>
        <taxon>Eukaryota</taxon>
        <taxon>Metazoa</taxon>
        <taxon>Ecdysozoa</taxon>
        <taxon>Nematoda</taxon>
        <taxon>Chromadorea</taxon>
        <taxon>Rhabditida</taxon>
        <taxon>Rhabditina</taxon>
        <taxon>Rhabditomorpha</taxon>
        <taxon>Rhabditoidea</taxon>
        <taxon>Rhabditidae</taxon>
        <taxon>Peloderinae</taxon>
        <taxon>Caenorhabditis</taxon>
    </lineage>
</organism>
<feature type="signal peptide" evidence="2">
    <location>
        <begin position="1"/>
        <end position="17"/>
    </location>
</feature>
<feature type="chain" id="PRO_0000013542" description="Endoplasmic reticulum chaperone BiP homolog">
    <location>
        <begin position="18"/>
        <end position="657"/>
    </location>
</feature>
<feature type="region of interest" description="Nucleotide-binding (NBD)" evidence="1">
    <location>
        <begin position="128"/>
        <end position="282"/>
    </location>
</feature>
<feature type="region of interest" description="Substrate-binding (SBD)" evidence="1">
    <location>
        <begin position="402"/>
        <end position="502"/>
    </location>
</feature>
<feature type="region of interest" description="Disordered" evidence="4">
    <location>
        <begin position="607"/>
        <end position="657"/>
    </location>
</feature>
<feature type="short sequence motif" description="Prevents secretion from ER" evidence="3">
    <location>
        <begin position="654"/>
        <end position="657"/>
    </location>
</feature>
<feature type="compositionally biased region" description="Basic and acidic residues" evidence="4">
    <location>
        <begin position="616"/>
        <end position="626"/>
    </location>
</feature>
<feature type="compositionally biased region" description="Acidic residues" evidence="4">
    <location>
        <begin position="646"/>
        <end position="657"/>
    </location>
</feature>
<feature type="binding site" evidence="1">
    <location>
        <begin position="38"/>
        <end position="41"/>
    </location>
    <ligand>
        <name>ATP</name>
        <dbReference type="ChEBI" id="CHEBI:30616"/>
    </ligand>
</feature>
<feature type="binding site" evidence="1">
    <location>
        <position position="99"/>
    </location>
    <ligand>
        <name>ATP</name>
        <dbReference type="ChEBI" id="CHEBI:30616"/>
    </ligand>
</feature>
<feature type="binding site" evidence="1">
    <location>
        <begin position="229"/>
        <end position="231"/>
    </location>
    <ligand>
        <name>ATP</name>
        <dbReference type="ChEBI" id="CHEBI:30616"/>
    </ligand>
</feature>
<feature type="binding site" evidence="1">
    <location>
        <begin position="295"/>
        <end position="302"/>
    </location>
    <ligand>
        <name>ATP</name>
        <dbReference type="ChEBI" id="CHEBI:30616"/>
    </ligand>
</feature>
<feature type="binding site" evidence="1">
    <location>
        <begin position="366"/>
        <end position="369"/>
    </location>
    <ligand>
        <name>ATP</name>
        <dbReference type="ChEBI" id="CHEBI:30616"/>
    </ligand>
</feature>
<feature type="sequence conflict" description="In Ref. 2; AAA28076." evidence="6" ref="2">
    <original>S</original>
    <variation>P</variation>
    <location>
        <position position="454"/>
    </location>
</feature>
<feature type="sequence conflict" description="In Ref. 2; AAA28076." evidence="6" ref="2">
    <original>M</original>
    <variation>I</variation>
    <location>
        <position position="574"/>
    </location>
</feature>
<feature type="strand" evidence="7">
    <location>
        <begin position="426"/>
        <end position="430"/>
    </location>
</feature>
<feature type="turn" evidence="7">
    <location>
        <begin position="431"/>
        <end position="433"/>
    </location>
</feature>
<feature type="strand" evidence="7">
    <location>
        <begin position="434"/>
        <end position="439"/>
    </location>
</feature>
<feature type="strand" evidence="7">
    <location>
        <begin position="444"/>
        <end position="457"/>
    </location>
</feature>
<feature type="strand" evidence="7">
    <location>
        <begin position="463"/>
        <end position="471"/>
    </location>
</feature>
<feature type="helix" evidence="7">
    <location>
        <begin position="475"/>
        <end position="477"/>
    </location>
</feature>
<feature type="strand" evidence="7">
    <location>
        <begin position="478"/>
        <end position="486"/>
    </location>
</feature>
<feature type="strand" evidence="7">
    <location>
        <begin position="499"/>
        <end position="505"/>
    </location>
</feature>
<feature type="strand" evidence="7">
    <location>
        <begin position="511"/>
        <end position="517"/>
    </location>
</feature>
<feature type="turn" evidence="7">
    <location>
        <begin position="518"/>
        <end position="520"/>
    </location>
</feature>
<feature type="strand" evidence="7">
    <location>
        <begin position="523"/>
        <end position="528"/>
    </location>
</feature>
<feature type="strand" evidence="7">
    <location>
        <begin position="530"/>
        <end position="533"/>
    </location>
</feature>
<feature type="helix" evidence="7">
    <location>
        <begin position="537"/>
        <end position="549"/>
    </location>
</feature>
<feature type="helix" evidence="7">
    <location>
        <begin position="551"/>
        <end position="560"/>
    </location>
</feature>
<feature type="strand" evidence="7">
    <location>
        <begin position="565"/>
        <end position="567"/>
    </location>
</feature>
<reference key="1">
    <citation type="journal article" date="1998" name="Science">
        <title>Genome sequence of the nematode C. elegans: a platform for investigating biology.</title>
        <authorList>
            <consortium name="The C. elegans sequencing consortium"/>
        </authorList>
    </citation>
    <scope>NUCLEOTIDE SEQUENCE [LARGE SCALE GENOMIC DNA]</scope>
    <source>
        <strain>Bristol N2</strain>
    </source>
</reference>
<reference key="2">
    <citation type="journal article" date="1989" name="Genome">
        <title>Identification of a heat-shock pseudogene from Caenorhabditis elegans.</title>
        <authorList>
            <person name="Heschl M.F.P."/>
            <person name="Baillie D.L."/>
        </authorList>
    </citation>
    <scope>NUCLEOTIDE SEQUENCE [GENOMIC DNA] OF 370-657</scope>
</reference>
<reference key="3">
    <citation type="journal article" date="2005" name="Mol. Biol. Cell">
        <title>Involvement of the actin cytoskeleton and homotypic membrane fusion in ER dynamics in Caenorhabditis elegans.</title>
        <authorList>
            <person name="Poteryaev D."/>
            <person name="Squirrell J.M."/>
            <person name="Campbell J.M."/>
            <person name="White J.G."/>
            <person name="Spang A."/>
        </authorList>
    </citation>
    <scope>FUNCTION</scope>
    <scope>DISRUPTION PHENOTYPE</scope>
</reference>
<reference key="4">
    <citation type="submission" date="2007-01" db="PDB data bank">
        <title>X-ray structure of peptide-binding domain of Heat shock 70 kDa protein D precursor from C.elegans.</title>
        <authorList>
            <person name="Osipiuk J."/>
            <person name="Duggan E."/>
            <person name="Gu M."/>
            <person name="Voisine C."/>
            <person name="Morimoto R.I."/>
            <person name="Joachimiak A."/>
        </authorList>
    </citation>
    <scope>X-RAY CRYSTALLOGRAPHY (1.85 ANGSTROMS) OF 420-568</scope>
</reference>
<proteinExistence type="evidence at protein level"/>
<name>BIBH_CAEEL</name>
<comment type="function">
    <text evidence="1 5">Endoplasmic reticulum chaperone that plays a key role in protein folding and quality control in the endoplasmic reticulum lumen (By similarity). Required for ER dynamics during the first embryonic cell divisions (PubMed:15716356). Specifically, controls ER transition into sheet-like structures at the onset of mitosis, possibly by regulating homotypic membrane fusion (PubMed:15716356).</text>
</comment>
<comment type="catalytic activity">
    <reaction evidence="1">
        <text>ATP + H2O = ADP + phosphate + H(+)</text>
        <dbReference type="Rhea" id="RHEA:13065"/>
        <dbReference type="ChEBI" id="CHEBI:15377"/>
        <dbReference type="ChEBI" id="CHEBI:15378"/>
        <dbReference type="ChEBI" id="CHEBI:30616"/>
        <dbReference type="ChEBI" id="CHEBI:43474"/>
        <dbReference type="ChEBI" id="CHEBI:456216"/>
        <dbReference type="EC" id="3.6.4.10"/>
    </reaction>
</comment>
<comment type="activity regulation">
    <text evidence="1">The chaperone activity is regulated by ATP-induced allosteric coupling of the nucleotide-binding (NBD) and substrate-binding (SBD) domains. In the ADP-bound and nucleotide-free (apo) states, the two domains have little interaction. In contrast, in the ATP-bound state the two domains are tightly coupled, which results in drastically accelerated kinetics in both binding and release of polypeptide substrates. J domain-containing co-chaperones stimulate the ATPase activity and are required for efficient substrate recognition.</text>
</comment>
<comment type="subcellular location">
    <subcellularLocation>
        <location evidence="1">Endoplasmic reticulum lumen</location>
    </subcellularLocation>
</comment>
<comment type="induction">
    <text evidence="1">By endoplasmic reticulum stress.</text>
</comment>
<comment type="disruption phenotype">
    <text evidence="5">RNAi-mediated knockdown prevents the formation of ER sheet-like structures during mitosis in the 1-cell embryo. ER accumulates in foci throughout mitosis and partially fails to disperse at the end of mitosis.</text>
</comment>
<comment type="similarity">
    <text evidence="6">Belongs to the heat shock protein 70 family.</text>
</comment>
<protein>
    <recommendedName>
        <fullName evidence="6">Endoplasmic reticulum chaperone BiP homolog</fullName>
    </recommendedName>
    <alternativeName>
        <fullName>Heat shock 70 kDa protein D</fullName>
        <ecNumber evidence="1">3.6.4.10</ecNumber>
    </alternativeName>
</protein>
<sequence length="657" mass="72288">MKVFSLILIAFVANAYCDEGASTEKEEKMGTIIGIDLGTTYSCVGVFKNGRVEIIANDQGNRITPSYVAFSGDQGERLIGDAAKNQLTINPENTIFDAKRLIGRFYNEKTVQQDIKHWPFKIVDKSNKPNVEVKVGSETKQFTPEEVSAMVLTKMKQIAESYLGHEVKNAVVTVPAYFNDAQKQATKDAGSIAGLNVVRIINEPTAAAIAYGLDKKDGERNILVFDLGGGTFDVSLLTIDSGVFEVLATNGDTHLGGEDFDQRVMEYFIKLYKKKSGKDLRKDNRAVQKLRREVEKAKRALSTQHQTKIEIESLFDGEDFSETLTRAKFEELNMDLFRATLKPVQKVLEDADMKKTDVHEIVLVGGSTRIPKVQQLIKDYFNGKEPSRGINPDEAVAYGAAVQAGVIGGVENTGDVVLLDVNPLTLGIETVGGVMTKLIGRNTVIPTKKSQVFSTAADSQSAVSIVIYEGERPMVMDNHKLGNFDVTGIPPAPRGVPQIEVTFEIDVNGILHVSAEDKGTGNKNKLTITNDHNRLSPEDIERMINDADKFAADDQAQKEKVESRNELEAYAYQMKTQIADKEKLGGKLTDEDKVSIESAVERAIEWLGSNQDASTEENKEQKKELESVVQPIVSKLYSAGGQGEQASEEPSEDHDEL</sequence>